<dbReference type="EC" id="3.4.11.1" evidence="1"/>
<dbReference type="EC" id="3.4.11.10" evidence="1"/>
<dbReference type="EMBL" id="BX294154">
    <property type="protein sequence ID" value="CAD77396.1"/>
    <property type="molecule type" value="Genomic_DNA"/>
</dbReference>
<dbReference type="RefSeq" id="NP_870321.1">
    <property type="nucleotide sequence ID" value="NC_005027.1"/>
</dbReference>
<dbReference type="SMR" id="Q7UJ62"/>
<dbReference type="FunCoup" id="Q7UJ62">
    <property type="interactions" value="415"/>
</dbReference>
<dbReference type="STRING" id="243090.RB12107"/>
<dbReference type="EnsemblBacteria" id="CAD77396">
    <property type="protein sequence ID" value="CAD77396"/>
    <property type="gene ID" value="RB12107"/>
</dbReference>
<dbReference type="KEGG" id="rba:RB12107"/>
<dbReference type="PATRIC" id="fig|243090.15.peg.5848"/>
<dbReference type="eggNOG" id="COG0260">
    <property type="taxonomic scope" value="Bacteria"/>
</dbReference>
<dbReference type="HOGENOM" id="CLU_013734_2_2_0"/>
<dbReference type="InParanoid" id="Q7UJ62"/>
<dbReference type="OrthoDB" id="9809354at2"/>
<dbReference type="Proteomes" id="UP000001025">
    <property type="component" value="Chromosome"/>
</dbReference>
<dbReference type="GO" id="GO:0005737">
    <property type="term" value="C:cytoplasm"/>
    <property type="evidence" value="ECO:0000318"/>
    <property type="project" value="GO_Central"/>
</dbReference>
<dbReference type="GO" id="GO:0030145">
    <property type="term" value="F:manganese ion binding"/>
    <property type="evidence" value="ECO:0007669"/>
    <property type="project" value="UniProtKB-UniRule"/>
</dbReference>
<dbReference type="GO" id="GO:0070006">
    <property type="term" value="F:metalloaminopeptidase activity"/>
    <property type="evidence" value="ECO:0007669"/>
    <property type="project" value="InterPro"/>
</dbReference>
<dbReference type="GO" id="GO:0008233">
    <property type="term" value="F:peptidase activity"/>
    <property type="evidence" value="ECO:0000318"/>
    <property type="project" value="GO_Central"/>
</dbReference>
<dbReference type="GO" id="GO:0006508">
    <property type="term" value="P:proteolysis"/>
    <property type="evidence" value="ECO:0000318"/>
    <property type="project" value="GO_Central"/>
</dbReference>
<dbReference type="CDD" id="cd00433">
    <property type="entry name" value="Peptidase_M17"/>
    <property type="match status" value="1"/>
</dbReference>
<dbReference type="Gene3D" id="3.40.220.10">
    <property type="entry name" value="Leucine Aminopeptidase, subunit E, domain 1"/>
    <property type="match status" value="1"/>
</dbReference>
<dbReference type="Gene3D" id="3.40.630.10">
    <property type="entry name" value="Zn peptidases"/>
    <property type="match status" value="1"/>
</dbReference>
<dbReference type="HAMAP" id="MF_00181">
    <property type="entry name" value="Cytosol_peptidase_M17"/>
    <property type="match status" value="1"/>
</dbReference>
<dbReference type="InterPro" id="IPR011356">
    <property type="entry name" value="Leucine_aapep/pepB"/>
</dbReference>
<dbReference type="InterPro" id="IPR043472">
    <property type="entry name" value="Macro_dom-like"/>
</dbReference>
<dbReference type="InterPro" id="IPR000819">
    <property type="entry name" value="Peptidase_M17_C"/>
</dbReference>
<dbReference type="InterPro" id="IPR023042">
    <property type="entry name" value="Peptidase_M17_leu_NH2_pept"/>
</dbReference>
<dbReference type="InterPro" id="IPR008283">
    <property type="entry name" value="Peptidase_M17_N"/>
</dbReference>
<dbReference type="NCBIfam" id="NF002073">
    <property type="entry name" value="PRK00913.1-2"/>
    <property type="match status" value="1"/>
</dbReference>
<dbReference type="PANTHER" id="PTHR11963:SF23">
    <property type="entry name" value="CYTOSOL AMINOPEPTIDASE"/>
    <property type="match status" value="1"/>
</dbReference>
<dbReference type="PANTHER" id="PTHR11963">
    <property type="entry name" value="LEUCINE AMINOPEPTIDASE-RELATED"/>
    <property type="match status" value="1"/>
</dbReference>
<dbReference type="Pfam" id="PF00883">
    <property type="entry name" value="Peptidase_M17"/>
    <property type="match status" value="1"/>
</dbReference>
<dbReference type="Pfam" id="PF02789">
    <property type="entry name" value="Peptidase_M17_N"/>
    <property type="match status" value="1"/>
</dbReference>
<dbReference type="PRINTS" id="PR00481">
    <property type="entry name" value="LAMNOPPTDASE"/>
</dbReference>
<dbReference type="SUPFAM" id="SSF52949">
    <property type="entry name" value="Macro domain-like"/>
    <property type="match status" value="1"/>
</dbReference>
<dbReference type="SUPFAM" id="SSF53187">
    <property type="entry name" value="Zn-dependent exopeptidases"/>
    <property type="match status" value="1"/>
</dbReference>
<dbReference type="PROSITE" id="PS00631">
    <property type="entry name" value="CYTOSOL_AP"/>
    <property type="match status" value="1"/>
</dbReference>
<keyword id="KW-0031">Aminopeptidase</keyword>
<keyword id="KW-0963">Cytoplasm</keyword>
<keyword id="KW-0378">Hydrolase</keyword>
<keyword id="KW-0464">Manganese</keyword>
<keyword id="KW-0479">Metal-binding</keyword>
<keyword id="KW-0645">Protease</keyword>
<keyword id="KW-1185">Reference proteome</keyword>
<gene>
    <name evidence="1" type="primary">pepA</name>
    <name type="ordered locus">RB12107</name>
</gene>
<sequence>MPPDLRMQPLPFPMMTLTSETKLDLEKAGVLVLGVEPSADSGESSDGKTTANCIAVSSLPESLAATVKNACSSGEVTGKPGELTSFATGNAQTPWIVLAGLGASDKRTRGSAIELGAAVVRSLASKPRQQITFALGDGVATENHDAVVAGAVSGCEGQHLYQREPSISVPEAIAFVGYSAESVSRGEKLGQSINHTRRLVNEPPSIMNPTGFAQYAEKIASDCGLTCEVWDEKKLEAENCRAILAVGRASTSPPRLVMLRHDGGGDEAPLVVVGKGVTFDSGGLSLKPSDGMVDMKCDMAGAATVVGVMNALAKLKVPRNVIGLCGLAENMVSGDSYKLGDVIETRSGKTIEILNTDAEGRVVLADTLDVAVQQKPQAIVDLATLTGACMVALGIDVAGLMTNNQALCDAVQSAAESECEPVWQLPMFSLYDDKVKSKVADIKNVGEGRWGGAITAAKFLENFVADVPWVHIDIAGPAFVDSPKPHRDAGATGVMVRSLVRWIENAS</sequence>
<proteinExistence type="inferred from homology"/>
<protein>
    <recommendedName>
        <fullName evidence="1">Probable cytosol aminopeptidase</fullName>
        <ecNumber evidence="1">3.4.11.1</ecNumber>
    </recommendedName>
    <alternativeName>
        <fullName evidence="1">Leucine aminopeptidase</fullName>
        <shortName evidence="1">LAP</shortName>
        <ecNumber evidence="1">3.4.11.10</ecNumber>
    </alternativeName>
    <alternativeName>
        <fullName evidence="1">Leucyl aminopeptidase</fullName>
    </alternativeName>
</protein>
<organism>
    <name type="scientific">Rhodopirellula baltica (strain DSM 10527 / NCIMB 13988 / SH1)</name>
    <dbReference type="NCBI Taxonomy" id="243090"/>
    <lineage>
        <taxon>Bacteria</taxon>
        <taxon>Pseudomonadati</taxon>
        <taxon>Planctomycetota</taxon>
        <taxon>Planctomycetia</taxon>
        <taxon>Pirellulales</taxon>
        <taxon>Pirellulaceae</taxon>
        <taxon>Rhodopirellula</taxon>
    </lineage>
</organism>
<reference key="1">
    <citation type="journal article" date="2003" name="Proc. Natl. Acad. Sci. U.S.A.">
        <title>Complete genome sequence of the marine planctomycete Pirellula sp. strain 1.</title>
        <authorList>
            <person name="Gloeckner F.O."/>
            <person name="Kube M."/>
            <person name="Bauer M."/>
            <person name="Teeling H."/>
            <person name="Lombardot T."/>
            <person name="Ludwig W."/>
            <person name="Gade D."/>
            <person name="Beck A."/>
            <person name="Borzym K."/>
            <person name="Heitmann K."/>
            <person name="Rabus R."/>
            <person name="Schlesner H."/>
            <person name="Amann R."/>
            <person name="Reinhardt R."/>
        </authorList>
    </citation>
    <scope>NUCLEOTIDE SEQUENCE [LARGE SCALE GENOMIC DNA]</scope>
    <source>
        <strain>DSM 10527 / NCIMB 13988 / SH1</strain>
    </source>
</reference>
<accession>Q7UJ62</accession>
<feature type="chain" id="PRO_0000165789" description="Probable cytosol aminopeptidase">
    <location>
        <begin position="1"/>
        <end position="507"/>
    </location>
</feature>
<feature type="active site" evidence="1">
    <location>
        <position position="287"/>
    </location>
</feature>
<feature type="active site" evidence="1">
    <location>
        <position position="361"/>
    </location>
</feature>
<feature type="binding site" evidence="1">
    <location>
        <position position="275"/>
    </location>
    <ligand>
        <name>Mn(2+)</name>
        <dbReference type="ChEBI" id="CHEBI:29035"/>
        <label>2</label>
    </ligand>
</feature>
<feature type="binding site" evidence="1">
    <location>
        <position position="280"/>
    </location>
    <ligand>
        <name>Mn(2+)</name>
        <dbReference type="ChEBI" id="CHEBI:29035"/>
        <label>1</label>
    </ligand>
</feature>
<feature type="binding site" evidence="1">
    <location>
        <position position="280"/>
    </location>
    <ligand>
        <name>Mn(2+)</name>
        <dbReference type="ChEBI" id="CHEBI:29035"/>
        <label>2</label>
    </ligand>
</feature>
<feature type="binding site" evidence="1">
    <location>
        <position position="298"/>
    </location>
    <ligand>
        <name>Mn(2+)</name>
        <dbReference type="ChEBI" id="CHEBI:29035"/>
        <label>2</label>
    </ligand>
</feature>
<feature type="binding site" evidence="1">
    <location>
        <position position="357"/>
    </location>
    <ligand>
        <name>Mn(2+)</name>
        <dbReference type="ChEBI" id="CHEBI:29035"/>
        <label>1</label>
    </ligand>
</feature>
<feature type="binding site" evidence="1">
    <location>
        <position position="359"/>
    </location>
    <ligand>
        <name>Mn(2+)</name>
        <dbReference type="ChEBI" id="CHEBI:29035"/>
        <label>1</label>
    </ligand>
</feature>
<feature type="binding site" evidence="1">
    <location>
        <position position="359"/>
    </location>
    <ligand>
        <name>Mn(2+)</name>
        <dbReference type="ChEBI" id="CHEBI:29035"/>
        <label>2</label>
    </ligand>
</feature>
<evidence type="ECO:0000255" key="1">
    <source>
        <dbReference type="HAMAP-Rule" id="MF_00181"/>
    </source>
</evidence>
<name>AMPA_RHOBA</name>
<comment type="function">
    <text evidence="1">Presumably involved in the processing and regular turnover of intracellular proteins. Catalyzes the removal of unsubstituted N-terminal amino acids from various peptides.</text>
</comment>
<comment type="catalytic activity">
    <reaction evidence="1">
        <text>Release of an N-terminal amino acid, Xaa-|-Yaa-, in which Xaa is preferably Leu, but may be other amino acids including Pro although not Arg or Lys, and Yaa may be Pro. Amino acid amides and methyl esters are also readily hydrolyzed, but rates on arylamides are exceedingly low.</text>
        <dbReference type="EC" id="3.4.11.1"/>
    </reaction>
</comment>
<comment type="catalytic activity">
    <reaction evidence="1">
        <text>Release of an N-terminal amino acid, preferentially leucine, but not glutamic or aspartic acids.</text>
        <dbReference type="EC" id="3.4.11.10"/>
    </reaction>
</comment>
<comment type="cofactor">
    <cofactor evidence="1">
        <name>Mn(2+)</name>
        <dbReference type="ChEBI" id="CHEBI:29035"/>
    </cofactor>
    <text evidence="1">Binds 2 manganese ions per subunit.</text>
</comment>
<comment type="subcellular location">
    <subcellularLocation>
        <location evidence="1">Cytoplasm</location>
    </subcellularLocation>
</comment>
<comment type="similarity">
    <text evidence="1">Belongs to the peptidase M17 family.</text>
</comment>